<keyword id="KW-0025">Alternative splicing</keyword>
<keyword id="KW-0325">Glycoprotein</keyword>
<keyword id="KW-0472">Membrane</keyword>
<keyword id="KW-0597">Phosphoprotein</keyword>
<keyword id="KW-1267">Proteomics identification</keyword>
<keyword id="KW-0656">Proto-oncogene</keyword>
<keyword id="KW-1185">Reference proteome</keyword>
<keyword id="KW-0732">Signal</keyword>
<keyword id="KW-0812">Transmembrane</keyword>
<keyword id="KW-1133">Transmembrane helix</keyword>
<proteinExistence type="evidence at protein level"/>
<accession>P34910</accession>
<accession>B7Z4A7</accession>
<sequence length="448" mass="48666">MDPKYFILILFCGHLNNTFFSKTETITTEKQSQPTLFTSSMSQVLANSQNTTGNPLGQPTQFSDTFSGQSISPAKVTAGQPTPAVYTSSEKPEAHTSAGQPLAYNTKQPTPIANTSSQQAVFTSARQLPSARTSTTQPPKSFVYTFTQQSSSVQIPSRKQITVHNPSTQPTSTVKNSPRSTPGFILDTTSNKQTPQKNNYNSIAAILIGVLLTSMLVAIIIIVLWKCLRKPVLNDQNWAGRSPFADGETPDICMDNIRENEISTKRTSIISLTPWKPSKSTLLADDLEIKLFESSENIEDSNNPKTEKIKDQVNGTSEDSADGSTVGTAVSSSDDADLPPPPPLLDLEGQESNQSDKPTMTIVSPLPNDSTSLPPSLDCLNQDCGDHKSEIIQSFPPLDSLNLPLPPVDFMKNQEDSNLEIQCQEFSIPPNSDQDLNESLPPPPAELL</sequence>
<reference key="1">
    <citation type="journal article" date="1991" name="Genomics">
        <title>cDNA sequence and genomic structure of EVI2B, a gene lying within an intron of the neurofibromatosis type 1 gene.</title>
        <authorList>
            <person name="Cawthon R.M."/>
            <person name="Andersen L.B."/>
            <person name="Buchberg A.M."/>
            <person name="Xu G."/>
            <person name="O'Connell P."/>
            <person name="Viskochil D."/>
            <person name="Weiss R.B."/>
            <person name="Wallace M.R."/>
            <person name="Marchuk D.A."/>
            <person name="Culver M."/>
            <person name="Stevens J."/>
            <person name="Jenkins N.A."/>
            <person name="Copeland N.G."/>
            <person name="Collins F.S."/>
            <person name="White R."/>
        </authorList>
    </citation>
    <scope>NUCLEOTIDE SEQUENCE [GENOMIC DNA / MRNA] (ISOFORM 1)</scope>
    <source>
        <tissue>Bone marrow</tissue>
    </source>
</reference>
<reference key="2">
    <citation type="journal article" date="2004" name="Nat. Genet.">
        <title>Complete sequencing and characterization of 21,243 full-length human cDNAs.</title>
        <authorList>
            <person name="Ota T."/>
            <person name="Suzuki Y."/>
            <person name="Nishikawa T."/>
            <person name="Otsuki T."/>
            <person name="Sugiyama T."/>
            <person name="Irie R."/>
            <person name="Wakamatsu A."/>
            <person name="Hayashi K."/>
            <person name="Sato H."/>
            <person name="Nagai K."/>
            <person name="Kimura K."/>
            <person name="Makita H."/>
            <person name="Sekine M."/>
            <person name="Obayashi M."/>
            <person name="Nishi T."/>
            <person name="Shibahara T."/>
            <person name="Tanaka T."/>
            <person name="Ishii S."/>
            <person name="Yamamoto J."/>
            <person name="Saito K."/>
            <person name="Kawai Y."/>
            <person name="Isono Y."/>
            <person name="Nakamura Y."/>
            <person name="Nagahari K."/>
            <person name="Murakami K."/>
            <person name="Yasuda T."/>
            <person name="Iwayanagi T."/>
            <person name="Wagatsuma M."/>
            <person name="Shiratori A."/>
            <person name="Sudo H."/>
            <person name="Hosoiri T."/>
            <person name="Kaku Y."/>
            <person name="Kodaira H."/>
            <person name="Kondo H."/>
            <person name="Sugawara M."/>
            <person name="Takahashi M."/>
            <person name="Kanda K."/>
            <person name="Yokoi T."/>
            <person name="Furuya T."/>
            <person name="Kikkawa E."/>
            <person name="Omura Y."/>
            <person name="Abe K."/>
            <person name="Kamihara K."/>
            <person name="Katsuta N."/>
            <person name="Sato K."/>
            <person name="Tanikawa M."/>
            <person name="Yamazaki M."/>
            <person name="Ninomiya K."/>
            <person name="Ishibashi T."/>
            <person name="Yamashita H."/>
            <person name="Murakawa K."/>
            <person name="Fujimori K."/>
            <person name="Tanai H."/>
            <person name="Kimata M."/>
            <person name="Watanabe M."/>
            <person name="Hiraoka S."/>
            <person name="Chiba Y."/>
            <person name="Ishida S."/>
            <person name="Ono Y."/>
            <person name="Takiguchi S."/>
            <person name="Watanabe S."/>
            <person name="Yosida M."/>
            <person name="Hotuta T."/>
            <person name="Kusano J."/>
            <person name="Kanehori K."/>
            <person name="Takahashi-Fujii A."/>
            <person name="Hara H."/>
            <person name="Tanase T.-O."/>
            <person name="Nomura Y."/>
            <person name="Togiya S."/>
            <person name="Komai F."/>
            <person name="Hara R."/>
            <person name="Takeuchi K."/>
            <person name="Arita M."/>
            <person name="Imose N."/>
            <person name="Musashino K."/>
            <person name="Yuuki H."/>
            <person name="Oshima A."/>
            <person name="Sasaki N."/>
            <person name="Aotsuka S."/>
            <person name="Yoshikawa Y."/>
            <person name="Matsunawa H."/>
            <person name="Ichihara T."/>
            <person name="Shiohata N."/>
            <person name="Sano S."/>
            <person name="Moriya S."/>
            <person name="Momiyama H."/>
            <person name="Satoh N."/>
            <person name="Takami S."/>
            <person name="Terashima Y."/>
            <person name="Suzuki O."/>
            <person name="Nakagawa S."/>
            <person name="Senoh A."/>
            <person name="Mizoguchi H."/>
            <person name="Goto Y."/>
            <person name="Shimizu F."/>
            <person name="Wakebe H."/>
            <person name="Hishigaki H."/>
            <person name="Watanabe T."/>
            <person name="Sugiyama A."/>
            <person name="Takemoto M."/>
            <person name="Kawakami B."/>
            <person name="Yamazaki M."/>
            <person name="Watanabe K."/>
            <person name="Kumagai A."/>
            <person name="Itakura S."/>
            <person name="Fukuzumi Y."/>
            <person name="Fujimori Y."/>
            <person name="Komiyama M."/>
            <person name="Tashiro H."/>
            <person name="Tanigami A."/>
            <person name="Fujiwara T."/>
            <person name="Ono T."/>
            <person name="Yamada K."/>
            <person name="Fujii Y."/>
            <person name="Ozaki K."/>
            <person name="Hirao M."/>
            <person name="Ohmori Y."/>
            <person name="Kawabata A."/>
            <person name="Hikiji T."/>
            <person name="Kobatake N."/>
            <person name="Inagaki H."/>
            <person name="Ikema Y."/>
            <person name="Okamoto S."/>
            <person name="Okitani R."/>
            <person name="Kawakami T."/>
            <person name="Noguchi S."/>
            <person name="Itoh T."/>
            <person name="Shigeta K."/>
            <person name="Senba T."/>
            <person name="Matsumura K."/>
            <person name="Nakajima Y."/>
            <person name="Mizuno T."/>
            <person name="Morinaga M."/>
            <person name="Sasaki M."/>
            <person name="Togashi T."/>
            <person name="Oyama M."/>
            <person name="Hata H."/>
            <person name="Watanabe M."/>
            <person name="Komatsu T."/>
            <person name="Mizushima-Sugano J."/>
            <person name="Satoh T."/>
            <person name="Shirai Y."/>
            <person name="Takahashi Y."/>
            <person name="Nakagawa K."/>
            <person name="Okumura K."/>
            <person name="Nagase T."/>
            <person name="Nomura N."/>
            <person name="Kikuchi H."/>
            <person name="Masuho Y."/>
            <person name="Yamashita R."/>
            <person name="Nakai K."/>
            <person name="Yada T."/>
            <person name="Nakamura Y."/>
            <person name="Ohara O."/>
            <person name="Isogai T."/>
            <person name="Sugano S."/>
        </authorList>
    </citation>
    <scope>NUCLEOTIDE SEQUENCE [LARGE SCALE MRNA] (ISOFORM 2)</scope>
    <source>
        <tissue>Umbilical cord blood</tissue>
    </source>
</reference>
<reference key="3">
    <citation type="journal article" date="2006" name="Nature">
        <title>DNA sequence of human chromosome 17 and analysis of rearrangement in the human lineage.</title>
        <authorList>
            <person name="Zody M.C."/>
            <person name="Garber M."/>
            <person name="Adams D.J."/>
            <person name="Sharpe T."/>
            <person name="Harrow J."/>
            <person name="Lupski J.R."/>
            <person name="Nicholson C."/>
            <person name="Searle S.M."/>
            <person name="Wilming L."/>
            <person name="Young S.K."/>
            <person name="Abouelleil A."/>
            <person name="Allen N.R."/>
            <person name="Bi W."/>
            <person name="Bloom T."/>
            <person name="Borowsky M.L."/>
            <person name="Bugalter B.E."/>
            <person name="Butler J."/>
            <person name="Chang J.L."/>
            <person name="Chen C.-K."/>
            <person name="Cook A."/>
            <person name="Corum B."/>
            <person name="Cuomo C.A."/>
            <person name="de Jong P.J."/>
            <person name="DeCaprio D."/>
            <person name="Dewar K."/>
            <person name="FitzGerald M."/>
            <person name="Gilbert J."/>
            <person name="Gibson R."/>
            <person name="Gnerre S."/>
            <person name="Goldstein S."/>
            <person name="Grafham D.V."/>
            <person name="Grocock R."/>
            <person name="Hafez N."/>
            <person name="Hagopian D.S."/>
            <person name="Hart E."/>
            <person name="Norman C.H."/>
            <person name="Humphray S."/>
            <person name="Jaffe D.B."/>
            <person name="Jones M."/>
            <person name="Kamal M."/>
            <person name="Khodiyar V.K."/>
            <person name="LaButti K."/>
            <person name="Laird G."/>
            <person name="Lehoczky J."/>
            <person name="Liu X."/>
            <person name="Lokyitsang T."/>
            <person name="Loveland J."/>
            <person name="Lui A."/>
            <person name="Macdonald P."/>
            <person name="Major J.E."/>
            <person name="Matthews L."/>
            <person name="Mauceli E."/>
            <person name="McCarroll S.A."/>
            <person name="Mihalev A.H."/>
            <person name="Mudge J."/>
            <person name="Nguyen C."/>
            <person name="Nicol R."/>
            <person name="O'Leary S.B."/>
            <person name="Osoegawa K."/>
            <person name="Schwartz D.C."/>
            <person name="Shaw-Smith C."/>
            <person name="Stankiewicz P."/>
            <person name="Steward C."/>
            <person name="Swarbreck D."/>
            <person name="Venkataraman V."/>
            <person name="Whittaker C.A."/>
            <person name="Yang X."/>
            <person name="Zimmer A.R."/>
            <person name="Bradley A."/>
            <person name="Hubbard T."/>
            <person name="Birren B.W."/>
            <person name="Rogers J."/>
            <person name="Lander E.S."/>
            <person name="Nusbaum C."/>
        </authorList>
    </citation>
    <scope>NUCLEOTIDE SEQUENCE [LARGE SCALE GENOMIC DNA]</scope>
</reference>
<reference key="4">
    <citation type="journal article" date="2009" name="Sci. Signal.">
        <title>Quantitative phosphoproteomic analysis of T cell receptor signaling reveals system-wide modulation of protein-protein interactions.</title>
        <authorList>
            <person name="Mayya V."/>
            <person name="Lundgren D.H."/>
            <person name="Hwang S.-I."/>
            <person name="Rezaul K."/>
            <person name="Wu L."/>
            <person name="Eng J.K."/>
            <person name="Rodionov V."/>
            <person name="Han D.K."/>
        </authorList>
    </citation>
    <scope>IDENTIFICATION BY MASS SPECTROMETRY [LARGE SCALE ANALYSIS]</scope>
    <source>
        <tissue>Leukemic T-cell</tissue>
    </source>
</reference>
<reference key="5">
    <citation type="journal article" date="2013" name="J. Proteome Res.">
        <title>Toward a comprehensive characterization of a human cancer cell phosphoproteome.</title>
        <authorList>
            <person name="Zhou H."/>
            <person name="Di Palma S."/>
            <person name="Preisinger C."/>
            <person name="Peng M."/>
            <person name="Polat A.N."/>
            <person name="Heck A.J."/>
            <person name="Mohammed S."/>
        </authorList>
    </citation>
    <scope>PHOSPHORYLATION [LARGE SCALE ANALYSIS] AT SER-268; SER-271 AND SER-294</scope>
    <scope>IDENTIFICATION BY MASS SPECTROMETRY [LARGE SCALE ANALYSIS]</scope>
    <source>
        <tissue>Erythroleukemia</tissue>
    </source>
</reference>
<reference key="6">
    <citation type="journal article" date="2017" name="Cell Death Differ.">
        <title>EVI2B is a C/EBPalpha target gene required for granulocytic differentiation and functionality of hematopoietic progenitors.</title>
        <authorList>
            <person name="Zjablovskaja P."/>
            <person name="Kardosova M."/>
            <person name="Danek P."/>
            <person name="Angelisova P."/>
            <person name="Benoukraf T."/>
            <person name="Wurm A.A."/>
            <person name="Kalina T."/>
            <person name="Sian S."/>
            <person name="Balastik M."/>
            <person name="Delwel R."/>
            <person name="Brdicka T."/>
            <person name="Tenen D.G."/>
            <person name="Behre G."/>
            <person name="Fiore F."/>
            <person name="Malissen B."/>
            <person name="Horejsi V."/>
            <person name="Alberich-Jorda M."/>
        </authorList>
    </citation>
    <scope>TISSUE SPECIFICITY</scope>
    <scope>INDUCTION</scope>
    <scope>FUNCTION</scope>
</reference>
<organism>
    <name type="scientific">Homo sapiens</name>
    <name type="common">Human</name>
    <dbReference type="NCBI Taxonomy" id="9606"/>
    <lineage>
        <taxon>Eukaryota</taxon>
        <taxon>Metazoa</taxon>
        <taxon>Chordata</taxon>
        <taxon>Craniata</taxon>
        <taxon>Vertebrata</taxon>
        <taxon>Euteleostomi</taxon>
        <taxon>Mammalia</taxon>
        <taxon>Eutheria</taxon>
        <taxon>Euarchontoglires</taxon>
        <taxon>Primates</taxon>
        <taxon>Haplorrhini</taxon>
        <taxon>Catarrhini</taxon>
        <taxon>Hominidae</taxon>
        <taxon>Homo</taxon>
    </lineage>
</organism>
<protein>
    <recommendedName>
        <fullName evidence="7">Protein EVI2B</fullName>
    </recommendedName>
    <alternativeName>
        <fullName>Ecotropic viral integration site 2B protein homolog</fullName>
        <shortName evidence="6">EVI-2B</shortName>
    </alternativeName>
    <cdAntigenName>CD361</cdAntigenName>
</protein>
<feature type="signal peptide" evidence="2">
    <location>
        <begin position="1"/>
        <end position="21"/>
    </location>
</feature>
<feature type="chain" id="PRO_0000021213" description="Protein EVI2B">
    <location>
        <begin position="22"/>
        <end position="448"/>
    </location>
</feature>
<feature type="topological domain" description="Extracellular" evidence="2">
    <location>
        <begin position="22"/>
        <end position="202"/>
    </location>
</feature>
<feature type="transmembrane region" description="Helical" evidence="2">
    <location>
        <begin position="203"/>
        <end position="226"/>
    </location>
</feature>
<feature type="topological domain" description="Cytoplasmic" evidence="2">
    <location>
        <begin position="227"/>
        <end position="448"/>
    </location>
</feature>
<feature type="region of interest" description="Disordered" evidence="3">
    <location>
        <begin position="74"/>
        <end position="108"/>
    </location>
</feature>
<feature type="region of interest" description="Disordered" evidence="3">
    <location>
        <begin position="298"/>
        <end position="372"/>
    </location>
</feature>
<feature type="region of interest" description="Disordered" evidence="3">
    <location>
        <begin position="427"/>
        <end position="448"/>
    </location>
</feature>
<feature type="compositionally biased region" description="Polar residues" evidence="3">
    <location>
        <begin position="97"/>
        <end position="108"/>
    </location>
</feature>
<feature type="compositionally biased region" description="Polar residues" evidence="3">
    <location>
        <begin position="313"/>
        <end position="333"/>
    </location>
</feature>
<feature type="compositionally biased region" description="Polar residues" evidence="3">
    <location>
        <begin position="350"/>
        <end position="372"/>
    </location>
</feature>
<feature type="modified residue" description="Phosphothreonine" evidence="1">
    <location>
        <position position="249"/>
    </location>
</feature>
<feature type="modified residue" description="Phosphoserine" evidence="9">
    <location>
        <position position="268"/>
    </location>
</feature>
<feature type="modified residue" description="Phosphoserine" evidence="9">
    <location>
        <position position="271"/>
    </location>
</feature>
<feature type="modified residue" description="Phosphoserine" evidence="1">
    <location>
        <position position="278"/>
    </location>
</feature>
<feature type="modified residue" description="Phosphoserine" evidence="9">
    <location>
        <position position="294"/>
    </location>
</feature>
<feature type="glycosylation site" description="N-linked (GlcNAc...) asparagine" evidence="2">
    <location>
        <position position="16"/>
    </location>
</feature>
<feature type="glycosylation site" description="N-linked (GlcNAc...) asparagine" evidence="2">
    <location>
        <position position="50"/>
    </location>
</feature>
<feature type="glycosylation site" description="N-linked (GlcNAc...) asparagine" evidence="2">
    <location>
        <position position="114"/>
    </location>
</feature>
<feature type="splice variant" id="VSP_056461" description="In isoform 2." evidence="5">
    <original>M</original>
    <variation>MLFRYAEKITRKYSEM</variation>
    <location>
        <position position="1"/>
    </location>
</feature>
<feature type="sequence variant" id="VAR_056871" description="In dbSNP:rs9903564.">
    <original>G</original>
    <variation>R</variation>
    <location>
        <position position="53"/>
    </location>
</feature>
<feature type="sequence conflict" description="In Ref. 1; AAA35816." evidence="7" ref="1">
    <original>F</original>
    <variation>Y</variation>
    <location>
        <position position="37"/>
    </location>
</feature>
<evidence type="ECO:0000250" key="1">
    <source>
        <dbReference type="UniProtKB" id="Q8VD58"/>
    </source>
</evidence>
<evidence type="ECO:0000255" key="2"/>
<evidence type="ECO:0000256" key="3">
    <source>
        <dbReference type="SAM" id="MobiDB-lite"/>
    </source>
</evidence>
<evidence type="ECO:0000269" key="4">
    <source>
    </source>
</evidence>
<evidence type="ECO:0000303" key="5">
    <source>
    </source>
</evidence>
<evidence type="ECO:0000303" key="6">
    <source>
    </source>
</evidence>
<evidence type="ECO:0000305" key="7"/>
<evidence type="ECO:0000312" key="8">
    <source>
        <dbReference type="HGNC" id="HGNC:3500"/>
    </source>
</evidence>
<evidence type="ECO:0007744" key="9">
    <source>
    </source>
</evidence>
<gene>
    <name evidence="6 8" type="primary">EVI2B</name>
    <name evidence="8" type="synonym">EVDB</name>
</gene>
<dbReference type="EMBL" id="M60830">
    <property type="protein sequence ID" value="AAA35816.1"/>
    <property type="molecule type" value="Genomic_DNA"/>
</dbReference>
<dbReference type="EMBL" id="AK297087">
    <property type="protein sequence ID" value="BAH12493.1"/>
    <property type="molecule type" value="mRNA"/>
</dbReference>
<dbReference type="EMBL" id="AC134669">
    <property type="status" value="NOT_ANNOTATED_CDS"/>
    <property type="molecule type" value="Genomic_DNA"/>
</dbReference>
<dbReference type="CCDS" id="CCDS11266.1">
    <molecule id="P34910-1"/>
</dbReference>
<dbReference type="PIR" id="A38445">
    <property type="entry name" value="A38445"/>
</dbReference>
<dbReference type="RefSeq" id="NP_006486.3">
    <molecule id="P34910-1"/>
    <property type="nucleotide sequence ID" value="NM_006495.3"/>
</dbReference>
<dbReference type="RefSeq" id="XP_005258003.1">
    <property type="nucleotide sequence ID" value="XM_005257946.3"/>
</dbReference>
<dbReference type="SMR" id="P34910"/>
<dbReference type="BioGRID" id="108425">
    <property type="interactions" value="33"/>
</dbReference>
<dbReference type="FunCoup" id="P34910">
    <property type="interactions" value="530"/>
</dbReference>
<dbReference type="IntAct" id="P34910">
    <property type="interactions" value="33"/>
</dbReference>
<dbReference type="STRING" id="9606.ENSP00000333779"/>
<dbReference type="GlyCosmos" id="P34910">
    <property type="glycosylation" value="5 sites, 2 glycans"/>
</dbReference>
<dbReference type="GlyGen" id="P34910">
    <property type="glycosylation" value="8 sites, 4 O-linked glycans (3 sites)"/>
</dbReference>
<dbReference type="iPTMnet" id="P34910"/>
<dbReference type="PhosphoSitePlus" id="P34910"/>
<dbReference type="SwissPalm" id="P34910"/>
<dbReference type="BioMuta" id="EVI2B"/>
<dbReference type="DMDM" id="281185464"/>
<dbReference type="CPTAC" id="CPTAC-1182"/>
<dbReference type="CPTAC" id="CPTAC-1207"/>
<dbReference type="jPOST" id="P34910"/>
<dbReference type="MassIVE" id="P34910"/>
<dbReference type="PaxDb" id="9606-ENSP00000333779"/>
<dbReference type="PeptideAtlas" id="P34910"/>
<dbReference type="ProteomicsDB" id="54952">
    <molecule id="P34910-1"/>
</dbReference>
<dbReference type="ProteomicsDB" id="6585"/>
<dbReference type="Antibodypedia" id="1927">
    <property type="antibodies" value="208 antibodies from 26 providers"/>
</dbReference>
<dbReference type="DNASU" id="2124"/>
<dbReference type="Ensembl" id="ENST00000330927.5">
    <molecule id="P34910-1"/>
    <property type="protein sequence ID" value="ENSP00000333779.4"/>
    <property type="gene ID" value="ENSG00000185862.7"/>
</dbReference>
<dbReference type="Ensembl" id="ENST00000577894.1">
    <molecule id="P34910-1"/>
    <property type="protein sequence ID" value="ENSP00000462682.1"/>
    <property type="gene ID" value="ENSG00000185862.7"/>
</dbReference>
<dbReference type="Ensembl" id="ENST00000708441.1">
    <molecule id="P34910-1"/>
    <property type="protein sequence ID" value="ENSP00000517226.1"/>
    <property type="gene ID" value="ENSG00000291721.1"/>
</dbReference>
<dbReference type="Ensembl" id="ENST00000708442.1">
    <molecule id="P34910-1"/>
    <property type="protein sequence ID" value="ENSP00000517227.1"/>
    <property type="gene ID" value="ENSG00000291721.1"/>
</dbReference>
<dbReference type="GeneID" id="2124"/>
<dbReference type="KEGG" id="hsa:2124"/>
<dbReference type="MANE-Select" id="ENST00000330927.5">
    <property type="protein sequence ID" value="ENSP00000333779.4"/>
    <property type="RefSeq nucleotide sequence ID" value="NM_006495.4"/>
    <property type="RefSeq protein sequence ID" value="NP_006486.3"/>
</dbReference>
<dbReference type="UCSC" id="uc002hgk.3">
    <molecule id="P34910-1"/>
    <property type="organism name" value="human"/>
</dbReference>
<dbReference type="AGR" id="HGNC:3500"/>
<dbReference type="CTD" id="2124"/>
<dbReference type="DisGeNET" id="2124"/>
<dbReference type="GeneCards" id="EVI2B"/>
<dbReference type="HGNC" id="HGNC:3500">
    <property type="gene designation" value="EVI2B"/>
</dbReference>
<dbReference type="HPA" id="ENSG00000185862">
    <property type="expression patterns" value="Tissue enhanced (bone marrow, lymphoid tissue)"/>
</dbReference>
<dbReference type="MIM" id="158381">
    <property type="type" value="gene"/>
</dbReference>
<dbReference type="neXtProt" id="NX_P34910"/>
<dbReference type="OpenTargets" id="ENSG00000185862"/>
<dbReference type="PharmGKB" id="PA27914"/>
<dbReference type="VEuPathDB" id="HostDB:ENSG00000185862"/>
<dbReference type="eggNOG" id="ENOG502S3T8">
    <property type="taxonomic scope" value="Eukaryota"/>
</dbReference>
<dbReference type="GeneTree" id="ENSGT00390000009142"/>
<dbReference type="HOGENOM" id="CLU_048893_0_0_1"/>
<dbReference type="InParanoid" id="P34910"/>
<dbReference type="OMA" id="GETPDMC"/>
<dbReference type="OrthoDB" id="9451284at2759"/>
<dbReference type="PAN-GO" id="P34910">
    <property type="GO annotations" value="2 GO annotations based on evolutionary models"/>
</dbReference>
<dbReference type="PhylomeDB" id="P34910"/>
<dbReference type="TreeFam" id="TF336167"/>
<dbReference type="PathwayCommons" id="P34910"/>
<dbReference type="SignaLink" id="P34910"/>
<dbReference type="BioGRID-ORCS" id="2124">
    <property type="hits" value="4 hits in 1133 CRISPR screens"/>
</dbReference>
<dbReference type="ChiTaRS" id="EVI2B">
    <property type="organism name" value="human"/>
</dbReference>
<dbReference type="GeneWiki" id="EVI2B"/>
<dbReference type="GenomeRNAi" id="2124"/>
<dbReference type="Pharos" id="P34910">
    <property type="development level" value="Tbio"/>
</dbReference>
<dbReference type="PRO" id="PR:P34910"/>
<dbReference type="Proteomes" id="UP000005640">
    <property type="component" value="Chromosome 17"/>
</dbReference>
<dbReference type="RNAct" id="P34910">
    <property type="molecule type" value="protein"/>
</dbReference>
<dbReference type="Bgee" id="ENSG00000185862">
    <property type="expression patterns" value="Expressed in monocyte and 175 other cell types or tissues"/>
</dbReference>
<dbReference type="GO" id="GO:0005886">
    <property type="term" value="C:plasma membrane"/>
    <property type="evidence" value="ECO:0000304"/>
    <property type="project" value="ProtInc"/>
</dbReference>
<dbReference type="GO" id="GO:0061515">
    <property type="term" value="P:myeloid cell development"/>
    <property type="evidence" value="ECO:0000250"/>
    <property type="project" value="UniProtKB"/>
</dbReference>
<dbReference type="GO" id="GO:0043066">
    <property type="term" value="P:negative regulation of apoptotic process"/>
    <property type="evidence" value="ECO:0000250"/>
    <property type="project" value="UniProtKB"/>
</dbReference>
<dbReference type="GO" id="GO:0030854">
    <property type="term" value="P:positive regulation of granulocyte differentiation"/>
    <property type="evidence" value="ECO:0000315"/>
    <property type="project" value="UniProtKB"/>
</dbReference>
<dbReference type="GO" id="GO:0045660">
    <property type="term" value="P:positive regulation of neutrophil differentiation"/>
    <property type="evidence" value="ECO:0000250"/>
    <property type="project" value="UniProtKB"/>
</dbReference>
<dbReference type="GO" id="GO:0051726">
    <property type="term" value="P:regulation of cell cycle"/>
    <property type="evidence" value="ECO:0000250"/>
    <property type="project" value="UniProtKB"/>
</dbReference>
<dbReference type="GO" id="GO:2000035">
    <property type="term" value="P:regulation of stem cell division"/>
    <property type="evidence" value="ECO:0000250"/>
    <property type="project" value="UniProtKB"/>
</dbReference>
<dbReference type="InterPro" id="IPR033239">
    <property type="entry name" value="EVI2B"/>
</dbReference>
<dbReference type="PANTHER" id="PTHR15384">
    <property type="entry name" value="PROTEIN EVI2B"/>
    <property type="match status" value="1"/>
</dbReference>
<dbReference type="PANTHER" id="PTHR15384:SF0">
    <property type="entry name" value="PROTEIN EVI2B"/>
    <property type="match status" value="1"/>
</dbReference>
<comment type="function">
    <text evidence="4">Required for granulocyte differentiation and functionality of hematopoietic progenitor cells through the control of cell cycle progression and survival of hematopoietic progenitor cells.</text>
</comment>
<comment type="interaction">
    <interactant intactId="EBI-17640610">
        <id>P34910-2</id>
    </interactant>
    <interactant intactId="EBI-715495">
        <id>P05090</id>
        <label>APOD</label>
    </interactant>
    <organismsDiffer>false</organismsDiffer>
    <experiments>3</experiments>
</comment>
<comment type="interaction">
    <interactant intactId="EBI-17640610">
        <id>P34910-2</id>
    </interactant>
    <interactant intactId="EBI-745213">
        <id>P29972</id>
        <label>AQP1</label>
    </interactant>
    <organismsDiffer>false</organismsDiffer>
    <experiments>3</experiments>
</comment>
<comment type="interaction">
    <interactant intactId="EBI-17640610">
        <id>P34910-2</id>
    </interactant>
    <interactant intactId="EBI-2808854">
        <id>Q92482</id>
        <label>AQP3</label>
    </interactant>
    <organismsDiffer>false</organismsDiffer>
    <experiments>3</experiments>
</comment>
<comment type="interaction">
    <interactant intactId="EBI-17640610">
        <id>P34910-2</id>
    </interactant>
    <interactant intactId="EBI-8648738">
        <id>Q8WVV5</id>
        <label>BTN2A2</label>
    </interactant>
    <organismsDiffer>false</organismsDiffer>
    <experiments>3</experiments>
</comment>
<comment type="interaction">
    <interactant intactId="EBI-17640610">
        <id>P34910-2</id>
    </interactant>
    <interactant intactId="EBI-358858">
        <id>O14735</id>
        <label>CDIPT</label>
    </interactant>
    <organismsDiffer>false</organismsDiffer>
    <experiments>3</experiments>
</comment>
<comment type="interaction">
    <interactant intactId="EBI-17640610">
        <id>P34910-2</id>
    </interactant>
    <interactant intactId="EBI-6165897">
        <id>Q9NWW5</id>
        <label>CLN6</label>
    </interactant>
    <organismsDiffer>false</organismsDiffer>
    <experiments>3</experiments>
</comment>
<comment type="interaction">
    <interactant intactId="EBI-17640610">
        <id>P34910-2</id>
    </interactant>
    <interactant intactId="EBI-12172273">
        <id>O95406</id>
        <label>CNIH1</label>
    </interactant>
    <organismsDiffer>false</organismsDiffer>
    <experiments>3</experiments>
</comment>
<comment type="interaction">
    <interactant intactId="EBI-17640610">
        <id>P34910-2</id>
    </interactant>
    <interactant intactId="EBI-2806959">
        <id>Q6ICB0</id>
        <label>DESI1</label>
    </interactant>
    <organismsDiffer>false</organismsDiffer>
    <experiments>3</experiments>
</comment>
<comment type="interaction">
    <interactant intactId="EBI-17640610">
        <id>P34910-2</id>
    </interactant>
    <interactant intactId="EBI-10305400">
        <id>Q8N682</id>
        <label>DRAM1</label>
    </interactant>
    <organismsDiffer>false</organismsDiffer>
    <experiments>3</experiments>
</comment>
<comment type="interaction">
    <interactant intactId="EBI-17640610">
        <id>P34910-2</id>
    </interactant>
    <interactant intactId="EBI-2876774">
        <id>Q92520</id>
        <label>FAM3C</label>
    </interactant>
    <organismsDiffer>false</organismsDiffer>
    <experiments>3</experiments>
</comment>
<comment type="interaction">
    <interactant intactId="EBI-17640610">
        <id>P34910-2</id>
    </interactant>
    <interactant intactId="EBI-714482">
        <id>Q9BWH2</id>
        <label>FUNDC2</label>
    </interactant>
    <organismsDiffer>false</organismsDiffer>
    <experiments>3</experiments>
</comment>
<comment type="interaction">
    <interactant intactId="EBI-17640610">
        <id>P34910-2</id>
    </interactant>
    <interactant intactId="EBI-3925203">
        <id>Q8N3T1</id>
        <label>GALNT15</label>
    </interactant>
    <organismsDiffer>false</organismsDiffer>
    <experiments>3</experiments>
</comment>
<comment type="interaction">
    <interactant intactId="EBI-17640610">
        <id>P34910-2</id>
    </interactant>
    <interactant intactId="EBI-6166686">
        <id>Q96F15</id>
        <label>GIMAP5</label>
    </interactant>
    <organismsDiffer>false</organismsDiffer>
    <experiments>3</experiments>
</comment>
<comment type="interaction">
    <interactant intactId="EBI-17640610">
        <id>P34910-2</id>
    </interactant>
    <interactant intactId="EBI-17641390">
        <id>A6NDP7</id>
        <label>MYADML2</label>
    </interactant>
    <organismsDiffer>false</organismsDiffer>
    <experiments>3</experiments>
</comment>
<comment type="interaction">
    <interactant intactId="EBI-17640610">
        <id>P34910-2</id>
    </interactant>
    <interactant intactId="EBI-10317425">
        <id>Q9NZG7</id>
        <label>NINJ2</label>
    </interactant>
    <organismsDiffer>false</organismsDiffer>
    <experiments>3</experiments>
</comment>
<comment type="interaction">
    <interactant intactId="EBI-17640610">
        <id>P34910-2</id>
    </interactant>
    <interactant intactId="EBI-6380741">
        <id>P42857</id>
        <label>NSG1</label>
    </interactant>
    <organismsDiffer>false</organismsDiffer>
    <experiments>3</experiments>
</comment>
<comment type="interaction">
    <interactant intactId="EBI-17640610">
        <id>P34910-2</id>
    </interactant>
    <interactant intactId="EBI-1045534">
        <id>O00264</id>
        <label>PGRMC1</label>
    </interactant>
    <organismsDiffer>false</organismsDiffer>
    <experiments>3</experiments>
</comment>
<comment type="interaction">
    <interactant intactId="EBI-17640610">
        <id>P34910-2</id>
    </interactant>
    <interactant intactId="EBI-10244780">
        <id>Q5QGT7</id>
        <label>RTP2</label>
    </interactant>
    <organismsDiffer>false</organismsDiffer>
    <experiments>3</experiments>
</comment>
<comment type="interaction">
    <interactant intactId="EBI-17640610">
        <id>P34910-2</id>
    </interactant>
    <interactant intactId="EBI-4403649">
        <id>Q969E2</id>
        <label>SCAMP4</label>
    </interactant>
    <organismsDiffer>false</organismsDiffer>
    <experiments>3</experiments>
</comment>
<comment type="interaction">
    <interactant intactId="EBI-17640610">
        <id>P34910-2</id>
    </interactant>
    <interactant intactId="EBI-2825135">
        <id>P22732</id>
        <label>SLC2A5</label>
    </interactant>
    <organismsDiffer>false</organismsDiffer>
    <experiments>3</experiments>
</comment>
<comment type="interaction">
    <interactant intactId="EBI-17640610">
        <id>P34910-2</id>
    </interactant>
    <interactant intactId="EBI-8644112">
        <id>Q9BRI3</id>
        <label>SLC30A2</label>
    </interactant>
    <organismsDiffer>false</organismsDiffer>
    <experiments>3</experiments>
</comment>
<comment type="interaction">
    <interactant intactId="EBI-17640610">
        <id>P34910-2</id>
    </interactant>
    <interactant intactId="EBI-10314552">
        <id>Q9NVC3</id>
        <label>SLC38A7</label>
    </interactant>
    <organismsDiffer>false</organismsDiffer>
    <experiments>3</experiments>
</comment>
<comment type="interaction">
    <interactant intactId="EBI-17640610">
        <id>P34910-2</id>
    </interactant>
    <interactant intactId="EBI-2823239">
        <id>Q9NUM3</id>
        <label>SLC39A9</label>
    </interactant>
    <organismsDiffer>false</organismsDiffer>
    <experiments>3</experiments>
</comment>
<comment type="interaction">
    <interactant intactId="EBI-17640610">
        <id>P34910-2</id>
    </interactant>
    <interactant intactId="EBI-12845616">
        <id>Q6UX40</id>
        <label>TMEM107</label>
    </interactant>
    <organismsDiffer>false</organismsDiffer>
    <experiments>3</experiments>
</comment>
<comment type="interaction">
    <interactant intactId="EBI-17640610">
        <id>P34910-2</id>
    </interactant>
    <interactant intactId="EBI-347385">
        <id>Q9H0R3</id>
        <label>TMEM222</label>
    </interactant>
    <organismsDiffer>false</organismsDiffer>
    <experiments>3</experiments>
</comment>
<comment type="interaction">
    <interactant intactId="EBI-17640610">
        <id>P34910-2</id>
    </interactant>
    <interactant intactId="EBI-2852148">
        <id>Q9H2L4</id>
        <label>TMEM60</label>
    </interactant>
    <organismsDiffer>false</organismsDiffer>
    <experiments>3</experiments>
</comment>
<comment type="interaction">
    <interactant intactId="EBI-17640610">
        <id>P34910-2</id>
    </interactant>
    <interactant intactId="EBI-2548832">
        <id>Q8N661</id>
        <label>TMEM86B</label>
    </interactant>
    <organismsDiffer>false</organismsDiffer>
    <experiments>3</experiments>
</comment>
<comment type="interaction">
    <interactant intactId="EBI-17640610">
        <id>P34910-2</id>
    </interactant>
    <interactant intactId="EBI-765817">
        <id>Q9Y228</id>
        <label>TRAF3IP3</label>
    </interactant>
    <organismsDiffer>false</organismsDiffer>
    <experiments>3</experiments>
</comment>
<comment type="interaction">
    <interactant intactId="EBI-17640610">
        <id>P34910-2</id>
    </interactant>
    <interactant intactId="EBI-11996766">
        <id>Q8N609</id>
        <label>TRAM1L1</label>
    </interactant>
    <organismsDiffer>false</organismsDiffer>
    <experiments>3</experiments>
</comment>
<comment type="interaction">
    <interactant intactId="EBI-17640610">
        <id>P34910-2</id>
    </interactant>
    <interactant intactId="EBI-2819725">
        <id>Q9Y5Z9</id>
        <label>UBIAD1</label>
    </interactant>
    <organismsDiffer>false</organismsDiffer>
    <experiments>3</experiments>
</comment>
<comment type="interaction">
    <interactant intactId="EBI-17640610">
        <id>P34910-2</id>
    </interactant>
    <interactant intactId="EBI-744953">
        <id>O75379</id>
        <label>VAMP4</label>
    </interactant>
    <organismsDiffer>false</organismsDiffer>
    <experiments>3</experiments>
</comment>
<comment type="subcellular location">
    <subcellularLocation>
        <location>Membrane</location>
        <topology>Single-pass type I membrane protein</topology>
    </subcellularLocation>
</comment>
<comment type="alternative products">
    <event type="alternative splicing"/>
    <isoform>
        <id>P34910-1</id>
        <name>1</name>
        <sequence type="displayed"/>
    </isoform>
    <isoform>
        <id>P34910-2</id>
        <name>2</name>
        <sequence type="described" ref="VSP_056461"/>
    </isoform>
</comment>
<comment type="tissue specificity">
    <text evidence="4">Bone marrow, peripheral blood mononuclear cells, fibroblasts and Epstein-Barr virus-transformed lymphoblastoid cell lines. Strongly expressed in granulocytic cells, and weakly on lymphocytes cells.</text>
</comment>
<comment type="induction">
    <text evidence="4">Up-regulated by full-length CEBPA.</text>
</comment>
<name>EVI2B_HUMAN</name>